<evidence type="ECO:0000255" key="1">
    <source>
        <dbReference type="HAMAP-Rule" id="MF_01865"/>
    </source>
</evidence>
<evidence type="ECO:0000255" key="2">
    <source>
        <dbReference type="PROSITE-ProRule" id="PRU01266"/>
    </source>
</evidence>
<accession>Q31G14</accession>
<feature type="chain" id="PRO_0000375058" description="Ribosomal protein uS12 methylthiotransferase RimO">
    <location>
        <begin position="1"/>
        <end position="453"/>
    </location>
</feature>
<feature type="domain" description="MTTase N-terminal" evidence="1">
    <location>
        <begin position="6"/>
        <end position="116"/>
    </location>
</feature>
<feature type="domain" description="Radical SAM core" evidence="2">
    <location>
        <begin position="134"/>
        <end position="371"/>
    </location>
</feature>
<feature type="domain" description="TRAM" evidence="1">
    <location>
        <begin position="374"/>
        <end position="440"/>
    </location>
</feature>
<feature type="binding site" evidence="1">
    <location>
        <position position="15"/>
    </location>
    <ligand>
        <name>[4Fe-4S] cluster</name>
        <dbReference type="ChEBI" id="CHEBI:49883"/>
        <label>1</label>
    </ligand>
</feature>
<feature type="binding site" evidence="1">
    <location>
        <position position="51"/>
    </location>
    <ligand>
        <name>[4Fe-4S] cluster</name>
        <dbReference type="ChEBI" id="CHEBI:49883"/>
        <label>1</label>
    </ligand>
</feature>
<feature type="binding site" evidence="1">
    <location>
        <position position="80"/>
    </location>
    <ligand>
        <name>[4Fe-4S] cluster</name>
        <dbReference type="ChEBI" id="CHEBI:49883"/>
        <label>1</label>
    </ligand>
</feature>
<feature type="binding site" evidence="1">
    <location>
        <position position="148"/>
    </location>
    <ligand>
        <name>[4Fe-4S] cluster</name>
        <dbReference type="ChEBI" id="CHEBI:49883"/>
        <label>2</label>
        <note>4Fe-4S-S-AdoMet</note>
    </ligand>
</feature>
<feature type="binding site" evidence="1">
    <location>
        <position position="152"/>
    </location>
    <ligand>
        <name>[4Fe-4S] cluster</name>
        <dbReference type="ChEBI" id="CHEBI:49883"/>
        <label>2</label>
        <note>4Fe-4S-S-AdoMet</note>
    </ligand>
</feature>
<feature type="binding site" evidence="1">
    <location>
        <position position="155"/>
    </location>
    <ligand>
        <name>[4Fe-4S] cluster</name>
        <dbReference type="ChEBI" id="CHEBI:49883"/>
        <label>2</label>
        <note>4Fe-4S-S-AdoMet</note>
    </ligand>
</feature>
<comment type="function">
    <text evidence="1">Catalyzes the methylthiolation of an aspartic acid residue of ribosomal protein uS12.</text>
</comment>
<comment type="catalytic activity">
    <reaction evidence="1">
        <text>L-aspartate(89)-[ribosomal protein uS12]-hydrogen + (sulfur carrier)-SH + AH2 + 2 S-adenosyl-L-methionine = 3-methylsulfanyl-L-aspartate(89)-[ribosomal protein uS12]-hydrogen + (sulfur carrier)-H + 5'-deoxyadenosine + L-methionine + A + S-adenosyl-L-homocysteine + 2 H(+)</text>
        <dbReference type="Rhea" id="RHEA:37087"/>
        <dbReference type="Rhea" id="RHEA-COMP:10460"/>
        <dbReference type="Rhea" id="RHEA-COMP:10461"/>
        <dbReference type="Rhea" id="RHEA-COMP:14737"/>
        <dbReference type="Rhea" id="RHEA-COMP:14739"/>
        <dbReference type="ChEBI" id="CHEBI:13193"/>
        <dbReference type="ChEBI" id="CHEBI:15378"/>
        <dbReference type="ChEBI" id="CHEBI:17319"/>
        <dbReference type="ChEBI" id="CHEBI:17499"/>
        <dbReference type="ChEBI" id="CHEBI:29917"/>
        <dbReference type="ChEBI" id="CHEBI:29961"/>
        <dbReference type="ChEBI" id="CHEBI:57844"/>
        <dbReference type="ChEBI" id="CHEBI:57856"/>
        <dbReference type="ChEBI" id="CHEBI:59789"/>
        <dbReference type="ChEBI" id="CHEBI:64428"/>
        <dbReference type="ChEBI" id="CHEBI:73599"/>
        <dbReference type="EC" id="2.8.4.4"/>
    </reaction>
</comment>
<comment type="cofactor">
    <cofactor evidence="1">
        <name>[4Fe-4S] cluster</name>
        <dbReference type="ChEBI" id="CHEBI:49883"/>
    </cofactor>
    <text evidence="1">Binds 2 [4Fe-4S] clusters. One cluster is coordinated with 3 cysteines and an exchangeable S-adenosyl-L-methionine.</text>
</comment>
<comment type="subcellular location">
    <subcellularLocation>
        <location evidence="1">Cytoplasm</location>
    </subcellularLocation>
</comment>
<comment type="similarity">
    <text evidence="1">Belongs to the methylthiotransferase family. RimO subfamily.</text>
</comment>
<name>RIMO_HYDCU</name>
<proteinExistence type="inferred from homology"/>
<gene>
    <name evidence="1" type="primary">rimO</name>
    <name type="ordered locus">Tcr_1314</name>
</gene>
<reference key="1">
    <citation type="journal article" date="2006" name="PLoS Biol.">
        <title>The genome of deep-sea vent chemolithoautotroph Thiomicrospira crunogena XCL-2.</title>
        <authorList>
            <person name="Scott K.M."/>
            <person name="Sievert S.M."/>
            <person name="Abril F.N."/>
            <person name="Ball L.A."/>
            <person name="Barrett C.J."/>
            <person name="Blake R.A."/>
            <person name="Boller A.J."/>
            <person name="Chain P.S.G."/>
            <person name="Clark J.A."/>
            <person name="Davis C.R."/>
            <person name="Detter C."/>
            <person name="Do K.F."/>
            <person name="Dobrinski K.P."/>
            <person name="Faza B.I."/>
            <person name="Fitzpatrick K.A."/>
            <person name="Freyermuth S.K."/>
            <person name="Harmer T.L."/>
            <person name="Hauser L.J."/>
            <person name="Huegler M."/>
            <person name="Kerfeld C.A."/>
            <person name="Klotz M.G."/>
            <person name="Kong W.W."/>
            <person name="Land M."/>
            <person name="Lapidus A."/>
            <person name="Larimer F.W."/>
            <person name="Longo D.L."/>
            <person name="Lucas S."/>
            <person name="Malfatti S.A."/>
            <person name="Massey S.E."/>
            <person name="Martin D.D."/>
            <person name="McCuddin Z."/>
            <person name="Meyer F."/>
            <person name="Moore J.L."/>
            <person name="Ocampo L.H. Jr."/>
            <person name="Paul J.H."/>
            <person name="Paulsen I.T."/>
            <person name="Reep D.K."/>
            <person name="Ren Q."/>
            <person name="Ross R.L."/>
            <person name="Sato P.Y."/>
            <person name="Thomas P."/>
            <person name="Tinkham L.E."/>
            <person name="Zeruth G.T."/>
        </authorList>
    </citation>
    <scope>NUCLEOTIDE SEQUENCE [LARGE SCALE GENOMIC DNA]</scope>
    <source>
        <strain>DSM 25203 / XCL-2</strain>
    </source>
</reference>
<keyword id="KW-0004">4Fe-4S</keyword>
<keyword id="KW-0963">Cytoplasm</keyword>
<keyword id="KW-0408">Iron</keyword>
<keyword id="KW-0411">Iron-sulfur</keyword>
<keyword id="KW-0479">Metal-binding</keyword>
<keyword id="KW-0949">S-adenosyl-L-methionine</keyword>
<keyword id="KW-0808">Transferase</keyword>
<organism>
    <name type="scientific">Hydrogenovibrio crunogenus (strain DSM 25203 / XCL-2)</name>
    <name type="common">Thiomicrospira crunogena</name>
    <dbReference type="NCBI Taxonomy" id="317025"/>
    <lineage>
        <taxon>Bacteria</taxon>
        <taxon>Pseudomonadati</taxon>
        <taxon>Pseudomonadota</taxon>
        <taxon>Gammaproteobacteria</taxon>
        <taxon>Thiotrichales</taxon>
        <taxon>Piscirickettsiaceae</taxon>
        <taxon>Hydrogenovibrio</taxon>
    </lineage>
</organism>
<protein>
    <recommendedName>
        <fullName evidence="1">Ribosomal protein uS12 methylthiotransferase RimO</fullName>
        <shortName evidence="1">uS12 MTTase</shortName>
        <shortName evidence="1">uS12 methylthiotransferase</shortName>
        <ecNumber evidence="1">2.8.4.4</ecNumber>
    </recommendedName>
    <alternativeName>
        <fullName evidence="1">Ribosomal protein uS12 (aspartate-C(3))-methylthiotransferase</fullName>
    </alternativeName>
    <alternativeName>
        <fullName evidence="1">Ribosome maturation factor RimO</fullName>
    </alternativeName>
</protein>
<dbReference type="EC" id="2.8.4.4" evidence="1"/>
<dbReference type="EMBL" id="CP000109">
    <property type="protein sequence ID" value="ABB41909.1"/>
    <property type="molecule type" value="Genomic_DNA"/>
</dbReference>
<dbReference type="SMR" id="Q31G14"/>
<dbReference type="STRING" id="317025.Tcr_1314"/>
<dbReference type="KEGG" id="tcx:Tcr_1314"/>
<dbReference type="eggNOG" id="COG0621">
    <property type="taxonomic scope" value="Bacteria"/>
</dbReference>
<dbReference type="HOGENOM" id="CLU_018697_0_0_6"/>
<dbReference type="OrthoDB" id="9805215at2"/>
<dbReference type="GO" id="GO:0005829">
    <property type="term" value="C:cytosol"/>
    <property type="evidence" value="ECO:0007669"/>
    <property type="project" value="TreeGrafter"/>
</dbReference>
<dbReference type="GO" id="GO:0051539">
    <property type="term" value="F:4 iron, 4 sulfur cluster binding"/>
    <property type="evidence" value="ECO:0007669"/>
    <property type="project" value="UniProtKB-UniRule"/>
</dbReference>
<dbReference type="GO" id="GO:0035599">
    <property type="term" value="F:aspartic acid methylthiotransferase activity"/>
    <property type="evidence" value="ECO:0007669"/>
    <property type="project" value="TreeGrafter"/>
</dbReference>
<dbReference type="GO" id="GO:0046872">
    <property type="term" value="F:metal ion binding"/>
    <property type="evidence" value="ECO:0007669"/>
    <property type="project" value="UniProtKB-KW"/>
</dbReference>
<dbReference type="GO" id="GO:0103039">
    <property type="term" value="F:protein methylthiotransferase activity"/>
    <property type="evidence" value="ECO:0007669"/>
    <property type="project" value="UniProtKB-EC"/>
</dbReference>
<dbReference type="GO" id="GO:0006400">
    <property type="term" value="P:tRNA modification"/>
    <property type="evidence" value="ECO:0007669"/>
    <property type="project" value="InterPro"/>
</dbReference>
<dbReference type="CDD" id="cd01335">
    <property type="entry name" value="Radical_SAM"/>
    <property type="match status" value="1"/>
</dbReference>
<dbReference type="FunFam" id="2.40.50.140:FF:000060">
    <property type="entry name" value="Ribosomal protein S12 methylthiotransferase RimO"/>
    <property type="match status" value="1"/>
</dbReference>
<dbReference type="FunFam" id="3.40.50.12160:FF:000002">
    <property type="entry name" value="Ribosomal protein S12 methylthiotransferase RimO"/>
    <property type="match status" value="1"/>
</dbReference>
<dbReference type="FunFam" id="3.80.30.20:FF:000001">
    <property type="entry name" value="tRNA-2-methylthio-N(6)-dimethylallyladenosine synthase 2"/>
    <property type="match status" value="1"/>
</dbReference>
<dbReference type="Gene3D" id="3.40.50.12160">
    <property type="entry name" value="Methylthiotransferase, N-terminal domain"/>
    <property type="match status" value="1"/>
</dbReference>
<dbReference type="Gene3D" id="2.40.50.140">
    <property type="entry name" value="Nucleic acid-binding proteins"/>
    <property type="match status" value="1"/>
</dbReference>
<dbReference type="Gene3D" id="3.80.30.20">
    <property type="entry name" value="tm_1862 like domain"/>
    <property type="match status" value="1"/>
</dbReference>
<dbReference type="HAMAP" id="MF_01865">
    <property type="entry name" value="MTTase_RimO"/>
    <property type="match status" value="1"/>
</dbReference>
<dbReference type="InterPro" id="IPR006638">
    <property type="entry name" value="Elp3/MiaA/NifB-like_rSAM"/>
</dbReference>
<dbReference type="InterPro" id="IPR005839">
    <property type="entry name" value="Methylthiotransferase"/>
</dbReference>
<dbReference type="InterPro" id="IPR020612">
    <property type="entry name" value="Methylthiotransferase_CS"/>
</dbReference>
<dbReference type="InterPro" id="IPR013848">
    <property type="entry name" value="Methylthiotransferase_N"/>
</dbReference>
<dbReference type="InterPro" id="IPR038135">
    <property type="entry name" value="Methylthiotransferase_N_sf"/>
</dbReference>
<dbReference type="InterPro" id="IPR012340">
    <property type="entry name" value="NA-bd_OB-fold"/>
</dbReference>
<dbReference type="InterPro" id="IPR005840">
    <property type="entry name" value="Ribosomal_uS12_MeSTrfase_RimO"/>
</dbReference>
<dbReference type="InterPro" id="IPR007197">
    <property type="entry name" value="rSAM"/>
</dbReference>
<dbReference type="InterPro" id="IPR023404">
    <property type="entry name" value="rSAM_horseshoe"/>
</dbReference>
<dbReference type="InterPro" id="IPR002792">
    <property type="entry name" value="TRAM_dom"/>
</dbReference>
<dbReference type="NCBIfam" id="TIGR01125">
    <property type="entry name" value="30S ribosomal protein S12 methylthiotransferase RimO"/>
    <property type="match status" value="1"/>
</dbReference>
<dbReference type="NCBIfam" id="TIGR00089">
    <property type="entry name" value="MiaB/RimO family radical SAM methylthiotransferase"/>
    <property type="match status" value="1"/>
</dbReference>
<dbReference type="PANTHER" id="PTHR43837">
    <property type="entry name" value="RIBOSOMAL PROTEIN S12 METHYLTHIOTRANSFERASE RIMO"/>
    <property type="match status" value="1"/>
</dbReference>
<dbReference type="PANTHER" id="PTHR43837:SF1">
    <property type="entry name" value="RIBOSOMAL PROTEIN US12 METHYLTHIOTRANSFERASE RIMO"/>
    <property type="match status" value="1"/>
</dbReference>
<dbReference type="Pfam" id="PF04055">
    <property type="entry name" value="Radical_SAM"/>
    <property type="match status" value="1"/>
</dbReference>
<dbReference type="Pfam" id="PF18693">
    <property type="entry name" value="TRAM_2"/>
    <property type="match status" value="1"/>
</dbReference>
<dbReference type="Pfam" id="PF00919">
    <property type="entry name" value="UPF0004"/>
    <property type="match status" value="1"/>
</dbReference>
<dbReference type="SFLD" id="SFLDG01082">
    <property type="entry name" value="B12-binding_domain_containing"/>
    <property type="match status" value="1"/>
</dbReference>
<dbReference type="SFLD" id="SFLDS00029">
    <property type="entry name" value="Radical_SAM"/>
    <property type="match status" value="1"/>
</dbReference>
<dbReference type="SFLD" id="SFLDF00274">
    <property type="entry name" value="ribosomal_protein_S12_methylth"/>
    <property type="match status" value="1"/>
</dbReference>
<dbReference type="SMART" id="SM00729">
    <property type="entry name" value="Elp3"/>
    <property type="match status" value="1"/>
</dbReference>
<dbReference type="SUPFAM" id="SSF102114">
    <property type="entry name" value="Radical SAM enzymes"/>
    <property type="match status" value="1"/>
</dbReference>
<dbReference type="PROSITE" id="PS51449">
    <property type="entry name" value="MTTASE_N"/>
    <property type="match status" value="1"/>
</dbReference>
<dbReference type="PROSITE" id="PS01278">
    <property type="entry name" value="MTTASE_RADICAL"/>
    <property type="match status" value="1"/>
</dbReference>
<dbReference type="PROSITE" id="PS51918">
    <property type="entry name" value="RADICAL_SAM"/>
    <property type="match status" value="1"/>
</dbReference>
<dbReference type="PROSITE" id="PS50926">
    <property type="entry name" value="TRAM"/>
    <property type="match status" value="1"/>
</dbReference>
<sequence length="453" mass="49892">MSQQQPTVGIVSLGCPKATVDSERILTQLKAEGYHLTNSYEEADAVIVNTCGFIDSAVQESLDTIGEALDENGRVIVTGCLGAKDGVIEKVHPSVLAVSGPAAYEEVLTAVHEAIAPPKHDPFVDLVPPQGIKLTPKHFAYLKISEGCNHRCTFCIIPSMRGNLVSRPVSDVVAEARRLKEAGVKELLVVSQDTAAYGVDVKYKTEFADGRPTKTSMFGLAEALSELGIWVRLHYVYPYPNVEDVIPLMAEGKLLPYLDMPLQHADPDILKAMKRPGNVDKTLERIKKWREQVPDLTIRSTFIVGFPGETEAQFQNLLDFIEEAQLDRVGCFQYSPVEGAVANDLAEPVPDEVKQERFDRFMQLQQQISANKMQAKIGKTIQVLVDEVDEEGAIARSKADAPEIDGMVFIPEGHHLNPGDFVEVEVFAADEYDLWATPVGEFVPQETSYVELG</sequence>